<evidence type="ECO:0000255" key="1"/>
<evidence type="ECO:0000269" key="2">
    <source>
    </source>
</evidence>
<evidence type="ECO:0000303" key="3">
    <source>
    </source>
</evidence>
<evidence type="ECO:0000305" key="4"/>
<evidence type="ECO:0000305" key="5">
    <source>
    </source>
</evidence>
<organism>
    <name type="scientific">Phoneutria nigriventer</name>
    <name type="common">Brazilian armed spider</name>
    <name type="synonym">Ctenus nigriventer</name>
    <dbReference type="NCBI Taxonomy" id="6918"/>
    <lineage>
        <taxon>Eukaryota</taxon>
        <taxon>Metazoa</taxon>
        <taxon>Ecdysozoa</taxon>
        <taxon>Arthropoda</taxon>
        <taxon>Chelicerata</taxon>
        <taxon>Arachnida</taxon>
        <taxon>Araneae</taxon>
        <taxon>Araneomorphae</taxon>
        <taxon>Entelegynae</taxon>
        <taxon>Lycosoidea</taxon>
        <taxon>Ctenidae</taxon>
        <taxon>Phoneutria</taxon>
    </lineage>
</organism>
<keyword id="KW-0027">Amidation</keyword>
<keyword id="KW-0903">Direct protein sequencing</keyword>
<keyword id="KW-0873">Pyrrolidone carboxylic acid</keyword>
<keyword id="KW-0964">Secreted</keyword>
<accession>P86304</accession>
<reference evidence="4" key="1">
    <citation type="journal article" date="2005" name="Rapid Commun. Mass Spectrom.">
        <title>Electrospray ionization quadrupole time-of-flight and matrix-assisted laser desorption/ionization tandem time-of-flight mass spectrometric analyses to solve micro-heterogeneity in post-translationally modified peptides from Phoneutria nigriventer (Aranea, Ctenidae) venom.</title>
        <authorList>
            <person name="Pimenta A.M.C."/>
            <person name="Rates B."/>
            <person name="Bloch C. Jr."/>
            <person name="Gomes P.C."/>
            <person name="Santoro M.M."/>
            <person name="de Lima M.E."/>
            <person name="Richardson M."/>
            <person name="Cordeiro M.N."/>
        </authorList>
    </citation>
    <scope>PROTEIN SEQUENCE</scope>
    <scope>SUBCELLULAR LOCATION</scope>
    <scope>TISSUE SPECIFICITY</scope>
    <scope>MASS SPECTROMETRY</scope>
    <scope>PYROGLUTAMATE FORMATION AT GLN-1</scope>
    <scope>AMIDATION AT PHE-10</scope>
    <source>
        <tissue evidence="2">Venom</tissue>
    </source>
</reference>
<feature type="peptide" id="PRO_0000402817" description="Tachykinin-like peptide-VII" evidence="2">
    <location>
        <begin position="1"/>
        <end position="10"/>
    </location>
</feature>
<feature type="modified residue" description="Pyrrolidone carboxylic acid" evidence="2">
    <location>
        <position position="1"/>
    </location>
</feature>
<feature type="modified residue" description="Phenylalanine amide" evidence="2">
    <location>
        <position position="10"/>
    </location>
</feature>
<feature type="unsure residue" description="L or I" evidence="2">
    <location>
        <position position="9"/>
    </location>
</feature>
<name>TLP7_PHONI</name>
<dbReference type="GO" id="GO:0005576">
    <property type="term" value="C:extracellular region"/>
    <property type="evidence" value="ECO:0000314"/>
    <property type="project" value="UniProtKB"/>
</dbReference>
<comment type="subcellular location">
    <subcellularLocation>
        <location evidence="2">Secreted</location>
    </subcellularLocation>
</comment>
<comment type="tissue specificity">
    <text evidence="2">Expressed by the venom gland.</text>
</comment>
<comment type="mass spectrometry"/>
<comment type="similarity">
    <text evidence="1">Belongs to the tachykinin family.</text>
</comment>
<proteinExistence type="evidence at protein level"/>
<sequence>QKKDRFLGLF</sequence>
<protein>
    <recommendedName>
        <fullName evidence="5">Tachykinin-like peptide-VII</fullName>
    </recommendedName>
    <alternativeName>
        <fullName evidence="3">P.nigriventer tachykinin peptides VII</fullName>
        <shortName evidence="3">PnTkP-VII</shortName>
    </alternativeName>
    <alternativeName>
        <fullName evidence="4">U29-ctenitoxin-Pn1g</fullName>
        <shortName evidence="4">U29-CNTX-Pn1g</shortName>
    </alternativeName>
</protein>